<evidence type="ECO:0000250" key="1">
    <source>
        <dbReference type="UniProtKB" id="L0E2Z4"/>
    </source>
</evidence>
<evidence type="ECO:0000250" key="2">
    <source>
        <dbReference type="UniProtKB" id="O93868"/>
    </source>
</evidence>
<evidence type="ECO:0000255" key="3">
    <source>
        <dbReference type="PROSITE-ProRule" id="PRU10001"/>
    </source>
</evidence>
<evidence type="ECO:0000269" key="4">
    <source>
    </source>
</evidence>
<evidence type="ECO:0000269" key="5">
    <source>
    </source>
</evidence>
<evidence type="ECO:0000269" key="6">
    <source>
    </source>
</evidence>
<evidence type="ECO:0000269" key="7">
    <source>
    </source>
</evidence>
<evidence type="ECO:0000305" key="8"/>
<evidence type="ECO:0000305" key="9">
    <source>
    </source>
</evidence>
<organism>
    <name type="scientific">Saccharomyces cerevisiae (strain ATCC 204508 / S288c)</name>
    <name type="common">Baker's yeast</name>
    <dbReference type="NCBI Taxonomy" id="559292"/>
    <lineage>
        <taxon>Eukaryota</taxon>
        <taxon>Fungi</taxon>
        <taxon>Dikarya</taxon>
        <taxon>Ascomycota</taxon>
        <taxon>Saccharomycotina</taxon>
        <taxon>Saccharomycetes</taxon>
        <taxon>Saccharomycetales</taxon>
        <taxon>Saccharomycetaceae</taxon>
        <taxon>Saccharomyces</taxon>
    </lineage>
</organism>
<proteinExistence type="evidence at protein level"/>
<gene>
    <name type="primary">IRC24</name>
    <name type="ordered locus">YIR036C</name>
</gene>
<comment type="function">
    <text evidence="4 9">Reduces benzil stereospecifically to (S)-benzoin (PubMed:11796169). Also reduces 1-phenyl-1,2-propanedione to 2-hydroxy-1-phenyl-1-propanone (PubMed:11796169). Is probably involved in a pathway contributing to genomic integrity (Probable).</text>
</comment>
<comment type="catalytic activity">
    <reaction evidence="4">
        <text>(S)-benzoin + NADP(+) = benzil + NADPH + H(+)</text>
        <dbReference type="Rhea" id="RHEA:25968"/>
        <dbReference type="ChEBI" id="CHEBI:15378"/>
        <dbReference type="ChEBI" id="CHEBI:51507"/>
        <dbReference type="ChEBI" id="CHEBI:51510"/>
        <dbReference type="ChEBI" id="CHEBI:57783"/>
        <dbReference type="ChEBI" id="CHEBI:58349"/>
        <dbReference type="EC" id="1.1.1.320"/>
    </reaction>
</comment>
<comment type="catalytic activity">
    <reaction evidence="4">
        <text>2-hydroxy-1-phenyl-1-propanone + NADP(+) = 1-phenyl-1,2-propanedione + NADPH + H(+)</text>
        <dbReference type="Rhea" id="RHEA:31891"/>
        <dbReference type="ChEBI" id="CHEBI:15378"/>
        <dbReference type="ChEBI" id="CHEBI:57783"/>
        <dbReference type="ChEBI" id="CHEBI:58349"/>
        <dbReference type="ChEBI" id="CHEBI:63552"/>
        <dbReference type="ChEBI" id="CHEBI:63553"/>
        <dbReference type="EC" id="1.1.1.320"/>
    </reaction>
</comment>
<comment type="biophysicochemical properties">
    <kinetics>
        <KM evidence="4">207 uM for benzil</KM>
        <KM evidence="4">28.7 uM for 1-phenyl-1,2-propanedione</KM>
        <text evidence="4">kcat is 9.2 min(-1) with benzil as substrate. kcat is 86.2 min(-1) with 1-phenyl-1,2-propanedione as substrate.</text>
    </kinetics>
</comment>
<comment type="induction">
    <text evidence="6">By single-strand DNA damage.</text>
</comment>
<comment type="disruption phenotype">
    <text evidence="7">Displays increased levels of spontaneous RAD52 foci in proliferating diploid cells.</text>
</comment>
<comment type="miscellaneous">
    <text evidence="5">Present with 1620 molecules/cell in log phase SD medium.</text>
</comment>
<comment type="similarity">
    <text evidence="8">Belongs to the short-chain dehydrogenases/reductases (SDR) family.</text>
</comment>
<protein>
    <recommendedName>
        <fullName>Benzil reductase ((S)-benzoin forming) IRC24</fullName>
        <ecNumber evidence="4">1.1.1.320</ecNumber>
    </recommendedName>
    <alternativeName>
        <fullName>Increased recombination centers protein 24</fullName>
    </alternativeName>
</protein>
<name>BZRD_YEAST</name>
<feature type="chain" id="PRO_0000054871" description="Benzil reductase ((S)-benzoin forming) IRC24">
    <location>
        <begin position="1"/>
        <end position="263"/>
    </location>
</feature>
<feature type="active site" description="Proton donor" evidence="2">
    <location>
        <position position="143"/>
    </location>
</feature>
<feature type="active site" description="Proton acceptor" evidence="3">
    <location>
        <position position="157"/>
    </location>
</feature>
<feature type="active site" description="Lowers pKa of active site Tyr" evidence="2">
    <location>
        <position position="161"/>
    </location>
</feature>
<feature type="binding site" evidence="1">
    <location>
        <position position="7"/>
    </location>
    <ligand>
        <name>NADP(+)</name>
        <dbReference type="ChEBI" id="CHEBI:58349"/>
    </ligand>
</feature>
<feature type="binding site" evidence="2">
    <location>
        <position position="86"/>
    </location>
    <ligand>
        <name>NADP(+)</name>
        <dbReference type="ChEBI" id="CHEBI:58349"/>
    </ligand>
</feature>
<feature type="binding site" evidence="2">
    <location>
        <position position="157"/>
    </location>
    <ligand>
        <name>NADP(+)</name>
        <dbReference type="ChEBI" id="CHEBI:58349"/>
    </ligand>
</feature>
<feature type="binding site" evidence="2">
    <location>
        <position position="161"/>
    </location>
    <ligand>
        <name>NADP(+)</name>
        <dbReference type="ChEBI" id="CHEBI:58349"/>
    </ligand>
</feature>
<feature type="binding site" evidence="2">
    <location>
        <position position="190"/>
    </location>
    <ligand>
        <name>NADP(+)</name>
        <dbReference type="ChEBI" id="CHEBI:58349"/>
    </ligand>
</feature>
<feature type="binding site" evidence="1">
    <location>
        <position position="192"/>
    </location>
    <ligand>
        <name>NADP(+)</name>
        <dbReference type="ChEBI" id="CHEBI:58349"/>
    </ligand>
</feature>
<dbReference type="EC" id="1.1.1.320" evidence="4"/>
<dbReference type="EMBL" id="Z38061">
    <property type="protein sequence ID" value="CAA86196.1"/>
    <property type="molecule type" value="Genomic_DNA"/>
</dbReference>
<dbReference type="EMBL" id="AY558240">
    <property type="protein sequence ID" value="AAS56566.1"/>
    <property type="molecule type" value="Genomic_DNA"/>
</dbReference>
<dbReference type="EMBL" id="AB052924">
    <property type="protein sequence ID" value="BAB86002.1"/>
    <property type="molecule type" value="Genomic_DNA"/>
</dbReference>
<dbReference type="EMBL" id="BK006942">
    <property type="protein sequence ID" value="DAA08583.1"/>
    <property type="molecule type" value="Genomic_DNA"/>
</dbReference>
<dbReference type="PIR" id="S48498">
    <property type="entry name" value="S48498"/>
</dbReference>
<dbReference type="RefSeq" id="NP_012302.3">
    <property type="nucleotide sequence ID" value="NM_001179558.3"/>
</dbReference>
<dbReference type="SMR" id="P40580"/>
<dbReference type="BioGRID" id="35027">
    <property type="interactions" value="32"/>
</dbReference>
<dbReference type="DIP" id="DIP-4707N"/>
<dbReference type="FunCoup" id="P40580">
    <property type="interactions" value="123"/>
</dbReference>
<dbReference type="STRING" id="4932.YIR036C"/>
<dbReference type="iPTMnet" id="P40580"/>
<dbReference type="PaxDb" id="4932-YIR036C"/>
<dbReference type="PeptideAtlas" id="P40580"/>
<dbReference type="EnsemblFungi" id="YIR036C_mRNA">
    <property type="protein sequence ID" value="YIR036C"/>
    <property type="gene ID" value="YIR036C"/>
</dbReference>
<dbReference type="GeneID" id="854854"/>
<dbReference type="KEGG" id="sce:YIR036C"/>
<dbReference type="AGR" id="SGD:S000001475"/>
<dbReference type="SGD" id="S000001475">
    <property type="gene designation" value="IRC24"/>
</dbReference>
<dbReference type="VEuPathDB" id="FungiDB:YIR036C"/>
<dbReference type="eggNOG" id="KOG1204">
    <property type="taxonomic scope" value="Eukaryota"/>
</dbReference>
<dbReference type="GeneTree" id="ENSGT00940000176436"/>
<dbReference type="HOGENOM" id="CLU_010194_2_11_1"/>
<dbReference type="InParanoid" id="P40580"/>
<dbReference type="OMA" id="PGDMATD"/>
<dbReference type="OrthoDB" id="153074at2759"/>
<dbReference type="BioCyc" id="YEAST:G3O-31450-MONOMER"/>
<dbReference type="BioGRID-ORCS" id="854854">
    <property type="hits" value="0 hits in 10 CRISPR screens"/>
</dbReference>
<dbReference type="PRO" id="PR:P40580"/>
<dbReference type="Proteomes" id="UP000002311">
    <property type="component" value="Chromosome IX"/>
</dbReference>
<dbReference type="RNAct" id="P40580">
    <property type="molecule type" value="protein"/>
</dbReference>
<dbReference type="GO" id="GO:0005737">
    <property type="term" value="C:cytoplasm"/>
    <property type="evidence" value="ECO:0007005"/>
    <property type="project" value="SGD"/>
</dbReference>
<dbReference type="GO" id="GO:0102306">
    <property type="term" value="F:benzil reductase [(S)-benzoin-forming] activity"/>
    <property type="evidence" value="ECO:0000314"/>
    <property type="project" value="SGD"/>
</dbReference>
<dbReference type="GO" id="GO:0050664">
    <property type="term" value="F:oxidoreductase activity, acting on NAD(P)H, oxygen as acceptor"/>
    <property type="evidence" value="ECO:0000314"/>
    <property type="project" value="SGD"/>
</dbReference>
<dbReference type="CDD" id="cd05367">
    <property type="entry name" value="SPR-like_SDR_c"/>
    <property type="match status" value="1"/>
</dbReference>
<dbReference type="FunFam" id="3.40.50.720:FF:000281">
    <property type="entry name" value="Uncharacterized oxidoreductase YIR035C"/>
    <property type="match status" value="1"/>
</dbReference>
<dbReference type="Gene3D" id="3.40.50.720">
    <property type="entry name" value="NAD(P)-binding Rossmann-like Domain"/>
    <property type="match status" value="1"/>
</dbReference>
<dbReference type="InterPro" id="IPR036291">
    <property type="entry name" value="NAD(P)-bd_dom_sf"/>
</dbReference>
<dbReference type="InterPro" id="IPR020904">
    <property type="entry name" value="Sc_DH/Rdtase_CS"/>
</dbReference>
<dbReference type="InterPro" id="IPR002347">
    <property type="entry name" value="SDR_fam"/>
</dbReference>
<dbReference type="PANTHER" id="PTHR43008">
    <property type="entry name" value="BENZIL REDUCTASE"/>
    <property type="match status" value="1"/>
</dbReference>
<dbReference type="PANTHER" id="PTHR43008:SF8">
    <property type="entry name" value="BENZIL REDUCTASE ((S)-BENZOIN FORMING) IRC24"/>
    <property type="match status" value="1"/>
</dbReference>
<dbReference type="Pfam" id="PF00106">
    <property type="entry name" value="adh_short"/>
    <property type="match status" value="1"/>
</dbReference>
<dbReference type="PRINTS" id="PR00081">
    <property type="entry name" value="GDHRDH"/>
</dbReference>
<dbReference type="SUPFAM" id="SSF51735">
    <property type="entry name" value="NAD(P)-binding Rossmann-fold domains"/>
    <property type="match status" value="1"/>
</dbReference>
<dbReference type="PROSITE" id="PS00061">
    <property type="entry name" value="ADH_SHORT"/>
    <property type="match status" value="1"/>
</dbReference>
<reference key="1">
    <citation type="journal article" date="2002" name="J. Biotechnol.">
        <title>The enzymes with benzil reductase activity conserved from bacteria to mammals.</title>
        <authorList>
            <person name="Maruyama R."/>
            <person name="Nishizawa M."/>
            <person name="Itoi Y."/>
            <person name="Ito S."/>
            <person name="Inoue M."/>
        </authorList>
    </citation>
    <scope>NUCLEOTIDE SEQUENCE [GENOMIC DNA]</scope>
    <scope>FUNCTION</scope>
    <scope>CATALYTIC ACTIVITY</scope>
    <scope>BIOPHYSICOCHEMICAL PROPERTIES</scope>
    <source>
        <strain>ATCC 204508 / S288c</strain>
    </source>
</reference>
<reference key="2">
    <citation type="journal article" date="1997" name="Nature">
        <title>The nucleotide sequence of Saccharomyces cerevisiae chromosome IX.</title>
        <authorList>
            <person name="Churcher C.M."/>
            <person name="Bowman S."/>
            <person name="Badcock K."/>
            <person name="Bankier A.T."/>
            <person name="Brown D."/>
            <person name="Chillingworth T."/>
            <person name="Connor R."/>
            <person name="Devlin K."/>
            <person name="Gentles S."/>
            <person name="Hamlin N."/>
            <person name="Harris D.E."/>
            <person name="Horsnell T."/>
            <person name="Hunt S."/>
            <person name="Jagels K."/>
            <person name="Jones M."/>
            <person name="Lye G."/>
            <person name="Moule S."/>
            <person name="Odell C."/>
            <person name="Pearson D."/>
            <person name="Rajandream M.A."/>
            <person name="Rice P."/>
            <person name="Rowley N."/>
            <person name="Skelton J."/>
            <person name="Smith V."/>
            <person name="Walsh S.V."/>
            <person name="Whitehead S."/>
            <person name="Barrell B.G."/>
        </authorList>
    </citation>
    <scope>NUCLEOTIDE SEQUENCE [LARGE SCALE GENOMIC DNA]</scope>
    <source>
        <strain>ATCC 204508 / S288c</strain>
    </source>
</reference>
<reference key="3">
    <citation type="journal article" date="2014" name="G3 (Bethesda)">
        <title>The reference genome sequence of Saccharomyces cerevisiae: Then and now.</title>
        <authorList>
            <person name="Engel S.R."/>
            <person name="Dietrich F.S."/>
            <person name="Fisk D.G."/>
            <person name="Binkley G."/>
            <person name="Balakrishnan R."/>
            <person name="Costanzo M.C."/>
            <person name="Dwight S.S."/>
            <person name="Hitz B.C."/>
            <person name="Karra K."/>
            <person name="Nash R.S."/>
            <person name="Weng S."/>
            <person name="Wong E.D."/>
            <person name="Lloyd P."/>
            <person name="Skrzypek M.S."/>
            <person name="Miyasato S.R."/>
            <person name="Simison M."/>
            <person name="Cherry J.M."/>
        </authorList>
    </citation>
    <scope>GENOME REANNOTATION</scope>
    <source>
        <strain>ATCC 204508 / S288c</strain>
    </source>
</reference>
<reference key="4">
    <citation type="journal article" date="2007" name="Genome Res.">
        <title>Approaching a complete repository of sequence-verified protein-encoding clones for Saccharomyces cerevisiae.</title>
        <authorList>
            <person name="Hu Y."/>
            <person name="Rolfs A."/>
            <person name="Bhullar B."/>
            <person name="Murthy T.V.S."/>
            <person name="Zhu C."/>
            <person name="Berger M.F."/>
            <person name="Camargo A.A."/>
            <person name="Kelley F."/>
            <person name="McCarron S."/>
            <person name="Jepson D."/>
            <person name="Richardson A."/>
            <person name="Raphael J."/>
            <person name="Moreira D."/>
            <person name="Taycher E."/>
            <person name="Zuo D."/>
            <person name="Mohr S."/>
            <person name="Kane M.F."/>
            <person name="Williamson J."/>
            <person name="Simpson A.J.G."/>
            <person name="Bulyk M.L."/>
            <person name="Harlow E."/>
            <person name="Marsischky G."/>
            <person name="Kolodner R.D."/>
            <person name="LaBaer J."/>
        </authorList>
    </citation>
    <scope>NUCLEOTIDE SEQUENCE [GENOMIC DNA]</scope>
    <source>
        <strain>ATCC 204508 / S288c</strain>
    </source>
</reference>
<reference key="5">
    <citation type="journal article" date="2003" name="Nature">
        <title>Global analysis of protein localization in budding yeast.</title>
        <authorList>
            <person name="Huh W.-K."/>
            <person name="Falvo J.V."/>
            <person name="Gerke L.C."/>
            <person name="Carroll A.S."/>
            <person name="Howson R.W."/>
            <person name="Weissman J.S."/>
            <person name="O'Shea E.K."/>
        </authorList>
    </citation>
    <scope>SUBCELLULAR LOCATION [LARGE SCALE ANALYSIS]</scope>
</reference>
<reference key="6">
    <citation type="journal article" date="2003" name="Nature">
        <title>Global analysis of protein expression in yeast.</title>
        <authorList>
            <person name="Ghaemmaghami S."/>
            <person name="Huh W.-K."/>
            <person name="Bower K."/>
            <person name="Howson R.W."/>
            <person name="Belle A."/>
            <person name="Dephoure N."/>
            <person name="O'Shea E.K."/>
            <person name="Weissman J.S."/>
        </authorList>
    </citation>
    <scope>LEVEL OF PROTEIN EXPRESSION [LARGE SCALE ANALYSIS]</scope>
</reference>
<reference key="7">
    <citation type="journal article" date="2006" name="BMC Genomics">
        <title>The DNA-damage signature in Saccharomyces cerevisiae is associated with single-strand breaks in DNA.</title>
        <authorList>
            <person name="Fry R.C."/>
            <person name="DeMott M.S."/>
            <person name="Cosgrove J.P."/>
            <person name="Begley T.J."/>
            <person name="Samson L.D."/>
            <person name="Dedon P.C."/>
        </authorList>
    </citation>
    <scope>INDUCTION</scope>
</reference>
<reference key="8">
    <citation type="journal article" date="2007" name="PLoS Genet.">
        <title>Genome-wide analysis of Rad52 foci reveals diverse mechanisms impacting recombination.</title>
        <authorList>
            <person name="Alvaro D."/>
            <person name="Lisby M."/>
            <person name="Rothstein R."/>
        </authorList>
    </citation>
    <scope>DISRUPTION PHENOTYPE</scope>
</reference>
<reference key="9">
    <citation type="journal article" date="2012" name="Proc. Natl. Acad. Sci. U.S.A.">
        <title>N-terminal acetylome analyses and functional insights of the N-terminal acetyltransferase NatB.</title>
        <authorList>
            <person name="Van Damme P."/>
            <person name="Lasa M."/>
            <person name="Polevoda B."/>
            <person name="Gazquez C."/>
            <person name="Elosegui-Artola A."/>
            <person name="Kim D.S."/>
            <person name="De Juan-Pardo E."/>
            <person name="Demeyer K."/>
            <person name="Hole K."/>
            <person name="Larrea E."/>
            <person name="Timmerman E."/>
            <person name="Prieto J."/>
            <person name="Arnesen T."/>
            <person name="Sherman F."/>
            <person name="Gevaert K."/>
            <person name="Aldabe R."/>
        </authorList>
    </citation>
    <scope>IDENTIFICATION BY MASS SPECTROMETRY [LARGE SCALE ANALYSIS]</scope>
</reference>
<accession>P40580</accession>
<accession>D6VVW7</accession>
<accession>Q54AB5</accession>
<sequence>MGKVILITGASRGIGLQLVKTVIEEDDECIVYGVARTEAGLQSLQREYGADKFVYRVLDITDRSRMEALVEEIRQKHGKLDGIVANAGMLEPVKSISQSNSEHDIKQWERLFDVNFFSIVSLVALCLPLLKSSPFVGNIVFVSSGASVKPYNGWSAYGCSKAALNHFAMDIASEEPSDKVRAVCIAPGVVDTQMQKDIRETLGPQGMTPKALERFTQLYKTSSLLDPKVPAAVLAQLVLKGIPDSLNGQYLRYNDERLGPVQG</sequence>
<keyword id="KW-0521">NADP</keyword>
<keyword id="KW-0560">Oxidoreductase</keyword>
<keyword id="KW-1185">Reference proteome</keyword>